<dbReference type="PDB" id="3FPR">
    <property type="method" value="X-ray"/>
    <property type="resolution" value="1.63 A"/>
    <property type="chains" value="A/D=21-114"/>
</dbReference>
<dbReference type="PDB" id="3FPT">
    <property type="method" value="X-ray"/>
    <property type="resolution" value="2.70 A"/>
    <property type="chains" value="A/B/C=21-114"/>
</dbReference>
<dbReference type="PDB" id="3FPU">
    <property type="method" value="X-ray"/>
    <property type="resolution" value="1.76 A"/>
    <property type="chains" value="A=21-114"/>
</dbReference>
<dbReference type="PDBsum" id="3FPR"/>
<dbReference type="PDBsum" id="3FPT"/>
<dbReference type="PDBsum" id="3FPU"/>
<dbReference type="SMR" id="P0C8E7"/>
<dbReference type="iPTMnet" id="P0C8E7"/>
<dbReference type="EvolutionaryTrace" id="P0C8E7"/>
<dbReference type="GO" id="GO:0005576">
    <property type="term" value="C:extracellular region"/>
    <property type="evidence" value="ECO:0007669"/>
    <property type="project" value="UniProtKB-SubCell"/>
</dbReference>
<dbReference type="GO" id="GO:0019957">
    <property type="term" value="F:C-C chemokine binding"/>
    <property type="evidence" value="ECO:0000314"/>
    <property type="project" value="UniProtKB"/>
</dbReference>
<dbReference type="GO" id="GO:0019956">
    <property type="term" value="F:chemokine binding"/>
    <property type="evidence" value="ECO:0000314"/>
    <property type="project" value="UniProtKB"/>
</dbReference>
<dbReference type="GO" id="GO:1900137">
    <property type="term" value="P:negative regulation of chemokine activity"/>
    <property type="evidence" value="ECO:0000314"/>
    <property type="project" value="UniProtKB"/>
</dbReference>
<dbReference type="Gene3D" id="2.30.130.100">
    <property type="match status" value="1"/>
</dbReference>
<dbReference type="InterPro" id="IPR045797">
    <property type="entry name" value="EVA_Class_A"/>
</dbReference>
<dbReference type="Pfam" id="PF19429">
    <property type="entry name" value="EVA_Class_A"/>
    <property type="match status" value="1"/>
</dbReference>
<sequence length="114" mass="12593">MTFKACIAIITALCAMQVICEDDEDYGDLGGCPFLVAENKTGYPTIVACKQDCNGTTETAPNGTRCFSIGDEGLRRMTANLPYDCPLGQCSNGDCIPKETYEVCYRRNWRDKKN</sequence>
<reference key="1">
    <citation type="journal article" date="2007" name="J. Biol. Chem.">
        <title>Molecular cloning and characterization of a highly selective chemokine-binding protein from the tick Rhipicephalus sanguineus.</title>
        <authorList>
            <person name="Frauenschuh A."/>
            <person name="Power C.A."/>
            <person name="Deruaz M."/>
            <person name="Ferreira B.R."/>
            <person name="Silva J.S."/>
            <person name="Teixeira M.M."/>
            <person name="Dias J.M."/>
            <person name="Martin T."/>
            <person name="Wells T.N.C."/>
            <person name="Proudfoot A.E.I."/>
        </authorList>
    </citation>
    <scope>NUCLEOTIDE SEQUENCE [MRNA]</scope>
    <scope>PROTEIN SEQUENCE OF N-TERMINUS</scope>
    <scope>SUBUNIT</scope>
    <scope>FUNCTION</scope>
    <source>
        <tissue>Salivary gland</tissue>
    </source>
</reference>
<reference key="2">
    <citation type="journal article" date="2008" name="J. Exp. Med.">
        <title>Ticks produce highly selective chemokine binding proteins with antiinflammatory activity.</title>
        <authorList>
            <person name="Deruaz M."/>
            <person name="Frauenschuh A."/>
            <person name="Alessandri A.L."/>
            <person name="Dias J.M."/>
            <person name="Coelho F.M."/>
            <person name="Russo R.C."/>
            <person name="Ferreira B.R."/>
            <person name="Graham G.J."/>
            <person name="Shaw J.P."/>
            <person name="Wells T.N.C."/>
            <person name="Teixeira M.M."/>
            <person name="Power C.A."/>
            <person name="Proudfoot A.E.I."/>
        </authorList>
    </citation>
    <scope>FUNCTION</scope>
</reference>
<reference key="3">
    <citation type="journal article" date="2014" name="J. Biol. Chem.">
        <title>Identification of the pharmacophore of the CC chemokine-binding proteins Evasin-1 and -4 using phage display.</title>
        <authorList>
            <person name="Bonvin P."/>
            <person name="Dunn S.M."/>
            <person name="Rousseau F."/>
            <person name="Dyer D.P."/>
            <person name="Shaw J."/>
            <person name="Power C.A."/>
            <person name="Handel T.M."/>
            <person name="Proudfoot A.E."/>
        </authorList>
    </citation>
    <scope>FUNCTION</scope>
    <scope>MUTAGENESIS OF ASP-23; GLU-24; ASP-25; TYR-26; ASP-28; PHE-34; GLU-58; ASN-108; TRP-109 AND ARG-110</scope>
</reference>
<reference evidence="11 12 13" key="4">
    <citation type="journal article" date="2009" name="PLoS ONE">
        <title>Structural basis of chemokine sequestration by a tick chemokine binding protein: the crystal structure of the complex between Evasin-1 and CCL3.</title>
        <authorList>
            <person name="Dias J.M."/>
            <person name="Losberger C."/>
            <person name="Deruaz M."/>
            <person name="Power C.A."/>
            <person name="Proudfoot A.E."/>
            <person name="Shaw J.P."/>
        </authorList>
    </citation>
    <scope>X-RAY CRYSTALLOGRAPHY (1.63 ANGSTROMS) OF 21-114 IN COMPLEX WITH HUMAN CCL3</scope>
    <scope>FUNCTION</scope>
    <scope>DOMAIN</scope>
    <scope>GLYCOSYLATION AT ASN-39 AND ASN-62</scope>
    <scope>DISULFIDE BONDS</scope>
</reference>
<name>EVA1_RHISA</name>
<evidence type="ECO:0000250" key="1">
    <source>
        <dbReference type="UniProtKB" id="P0C8E8"/>
    </source>
</evidence>
<evidence type="ECO:0000255" key="2">
    <source>
        <dbReference type="PROSITE-ProRule" id="PRU00498"/>
    </source>
</evidence>
<evidence type="ECO:0000269" key="3">
    <source>
    </source>
</evidence>
<evidence type="ECO:0000269" key="4">
    <source>
    </source>
</evidence>
<evidence type="ECO:0000269" key="5">
    <source>
    </source>
</evidence>
<evidence type="ECO:0000269" key="6">
    <source>
    </source>
</evidence>
<evidence type="ECO:0000303" key="7">
    <source>
    </source>
</evidence>
<evidence type="ECO:0000303" key="8">
    <source>
    </source>
</evidence>
<evidence type="ECO:0000303" key="9">
    <source>
    </source>
</evidence>
<evidence type="ECO:0000305" key="10"/>
<evidence type="ECO:0007744" key="11">
    <source>
        <dbReference type="PDB" id="3FPR"/>
    </source>
</evidence>
<evidence type="ECO:0007744" key="12">
    <source>
        <dbReference type="PDB" id="3FPT"/>
    </source>
</evidence>
<evidence type="ECO:0007744" key="13">
    <source>
        <dbReference type="PDB" id="3FPU"/>
    </source>
</evidence>
<evidence type="ECO:0007829" key="14">
    <source>
        <dbReference type="PDB" id="3FPR"/>
    </source>
</evidence>
<evidence type="ECO:0007829" key="15">
    <source>
        <dbReference type="PDB" id="3FPU"/>
    </source>
</evidence>
<keyword id="KW-0002">3D-structure</keyword>
<keyword id="KW-0903">Direct protein sequencing</keyword>
<keyword id="KW-1015">Disulfide bond</keyword>
<keyword id="KW-0325">Glycoprotein</keyword>
<keyword id="KW-0964">Secreted</keyword>
<keyword id="KW-0732">Signal</keyword>
<protein>
    <recommendedName>
        <fullName evidence="7 8 9">Evasin-1</fullName>
        <shortName evidence="1 10">EVA1</shortName>
    </recommendedName>
</protein>
<comment type="function">
    <text evidence="3 4 5 6">Salivary chemokine-binding protein which shows chemokine neutralizing activity and binds to host chemokines CCL3, CCL4 and CCL18 (PubMed:17640866, PubMed:18678732, PubMed:20041127, PubMed:25266725). Binds to CCL3 with 1:1 stoichiometry (PubMed:20041127).</text>
</comment>
<comment type="subunit">
    <text evidence="3">Monomer.</text>
</comment>
<comment type="subcellular location">
    <subcellularLocation>
        <location evidence="10">Secreted</location>
    </subcellularLocation>
</comment>
<comment type="domain">
    <text evidence="5">Both the N- and C-termini are required for chemokine-binding.</text>
</comment>
<comment type="similarity">
    <text evidence="10">Belongs to the evasin C8 family.</text>
</comment>
<comment type="online information" name="Protein Spotlight">
    <link uri="https://www.proteinspotlight.org/back_issues/099"/>
    <text>Hidden powers - Issue 99 of November 2008</text>
</comment>
<proteinExistence type="evidence at protein level"/>
<accession>P0C8E7</accession>
<feature type="signal peptide" evidence="3">
    <location>
        <begin position="1"/>
        <end position="20"/>
    </location>
</feature>
<feature type="chain" id="PRO_0000354057" description="Evasin-1">
    <location>
        <begin position="21"/>
        <end position="114"/>
    </location>
</feature>
<feature type="glycosylation site" description="N-linked (GlcNAc...) asparagine" evidence="5 12">
    <location>
        <position position="39"/>
    </location>
</feature>
<feature type="glycosylation site" description="N-linked (GlcNAc...) asparagine" evidence="2">
    <location>
        <position position="54"/>
    </location>
</feature>
<feature type="glycosylation site" description="N-linked (GlcNAc...) asparagine" evidence="5 12">
    <location>
        <position position="62"/>
    </location>
</feature>
<feature type="disulfide bond" evidence="5 11 12 13">
    <location>
        <begin position="32"/>
        <end position="53"/>
    </location>
</feature>
<feature type="disulfide bond" evidence="5 11 12 13">
    <location>
        <begin position="49"/>
        <end position="90"/>
    </location>
</feature>
<feature type="disulfide bond" evidence="5 11 12 13">
    <location>
        <begin position="66"/>
        <end position="95"/>
    </location>
</feature>
<feature type="disulfide bond" evidence="5 11 12 13">
    <location>
        <begin position="85"/>
        <end position="104"/>
    </location>
</feature>
<feature type="mutagenesis site" description="No effect on binding to CCL3." evidence="6">
    <original>D</original>
    <variation>A</variation>
    <location>
        <position position="23"/>
    </location>
</feature>
<feature type="mutagenesis site" description="No effect on binding to CCL3." evidence="6">
    <original>E</original>
    <variation>A</variation>
    <location>
        <position position="24"/>
    </location>
</feature>
<feature type="mutagenesis site" description="No effect on binding to CCL3." evidence="6">
    <original>D</original>
    <variation>A</variation>
    <location>
        <position position="25"/>
    </location>
</feature>
<feature type="mutagenesis site" description="No effect on binding to CCL3." evidence="6">
    <original>Y</original>
    <variation>A</variation>
    <location>
        <position position="26"/>
    </location>
</feature>
<feature type="mutagenesis site" description="No effect on binding to CCL3." evidence="6">
    <original>D</original>
    <variation>A</variation>
    <location>
        <position position="28"/>
    </location>
</feature>
<feature type="mutagenesis site" description="Significantly reduced binding to CCL3." evidence="6">
    <original>F</original>
    <variation>A</variation>
    <location>
        <position position="34"/>
    </location>
</feature>
<feature type="mutagenesis site" description="No effect on binding to CCL3." evidence="6">
    <original>E</original>
    <variation>A</variation>
    <location>
        <position position="58"/>
    </location>
</feature>
<feature type="mutagenesis site" description="Significantly reduced binding to CCL3 and significantly reduced inhibition of chemokine activity." evidence="6">
    <original>N</original>
    <variation>A</variation>
    <location>
        <position position="108"/>
    </location>
</feature>
<feature type="mutagenesis site" description="Significantly reduced binding to CCL3 and significantly reduced inhibition of chemokine activity." evidence="6">
    <original>W</original>
    <variation>A</variation>
    <location>
        <position position="109"/>
    </location>
</feature>
<feature type="mutagenesis site" description="No effect on binding to CCL3." evidence="6">
    <original>R</original>
    <variation>A</variation>
    <location>
        <position position="110"/>
    </location>
</feature>
<feature type="strand" evidence="15">
    <location>
        <begin position="25"/>
        <end position="27"/>
    </location>
</feature>
<feature type="strand" evidence="14">
    <location>
        <begin position="34"/>
        <end position="38"/>
    </location>
</feature>
<feature type="strand" evidence="14">
    <location>
        <begin position="44"/>
        <end position="47"/>
    </location>
</feature>
<feature type="strand" evidence="14">
    <location>
        <begin position="49"/>
        <end position="53"/>
    </location>
</feature>
<feature type="strand" evidence="14">
    <location>
        <begin position="56"/>
        <end position="59"/>
    </location>
</feature>
<feature type="strand" evidence="14">
    <location>
        <begin position="65"/>
        <end position="67"/>
    </location>
</feature>
<feature type="helix" evidence="14">
    <location>
        <begin position="70"/>
        <end position="76"/>
    </location>
</feature>
<feature type="strand" evidence="14">
    <location>
        <begin position="83"/>
        <end position="91"/>
    </location>
</feature>
<feature type="strand" evidence="14">
    <location>
        <begin position="94"/>
        <end position="105"/>
    </location>
</feature>
<feature type="helix" evidence="15">
    <location>
        <begin position="109"/>
        <end position="112"/>
    </location>
</feature>
<organism>
    <name type="scientific">Rhipicephalus sanguineus</name>
    <name type="common">Brown dog tick</name>
    <name type="synonym">Ixodes sanguineus</name>
    <dbReference type="NCBI Taxonomy" id="34632"/>
    <lineage>
        <taxon>Eukaryota</taxon>
        <taxon>Metazoa</taxon>
        <taxon>Ecdysozoa</taxon>
        <taxon>Arthropoda</taxon>
        <taxon>Chelicerata</taxon>
        <taxon>Arachnida</taxon>
        <taxon>Acari</taxon>
        <taxon>Parasitiformes</taxon>
        <taxon>Ixodida</taxon>
        <taxon>Ixodoidea</taxon>
        <taxon>Ixodidae</taxon>
        <taxon>Rhipicephalinae</taxon>
        <taxon>Rhipicephalus</taxon>
        <taxon>Rhipicephalus</taxon>
    </lineage>
</organism>